<dbReference type="EMBL" id="AF084570">
    <property type="protein sequence ID" value="AAC72922.1"/>
    <property type="molecule type" value="mRNA"/>
</dbReference>
<dbReference type="EMBL" id="AL132957">
    <property type="protein sequence ID" value="CAB70991.1"/>
    <property type="molecule type" value="Genomic_DNA"/>
</dbReference>
<dbReference type="EMBL" id="CP002686">
    <property type="protein sequence ID" value="AEE79195.1"/>
    <property type="molecule type" value="Genomic_DNA"/>
</dbReference>
<dbReference type="EMBL" id="AY063940">
    <property type="protein sequence ID" value="AAL36296.1"/>
    <property type="molecule type" value="mRNA"/>
</dbReference>
<dbReference type="EMBL" id="AY113943">
    <property type="protein sequence ID" value="AAM44991.1"/>
    <property type="molecule type" value="mRNA"/>
</dbReference>
<dbReference type="PIR" id="T47576">
    <property type="entry name" value="T47576"/>
</dbReference>
<dbReference type="RefSeq" id="NP_190985.1">
    <property type="nucleotide sequence ID" value="NM_115277.5"/>
</dbReference>
<dbReference type="SMR" id="Q9ZSZ8"/>
<dbReference type="BioGRID" id="9901">
    <property type="interactions" value="13"/>
</dbReference>
<dbReference type="FunCoup" id="Q9ZSZ8">
    <property type="interactions" value="3294"/>
</dbReference>
<dbReference type="IntAct" id="Q9ZSZ8">
    <property type="interactions" value="10"/>
</dbReference>
<dbReference type="STRING" id="3702.Q9ZSZ8"/>
<dbReference type="iPTMnet" id="Q9ZSZ8"/>
<dbReference type="PaxDb" id="3702-AT3G54170.1"/>
<dbReference type="ProteomicsDB" id="232081"/>
<dbReference type="EnsemblPlants" id="AT3G54170.1">
    <property type="protein sequence ID" value="AT3G54170.1"/>
    <property type="gene ID" value="AT3G54170"/>
</dbReference>
<dbReference type="GeneID" id="824584"/>
<dbReference type="Gramene" id="AT3G54170.1">
    <property type="protein sequence ID" value="AT3G54170.1"/>
    <property type="gene ID" value="AT3G54170"/>
</dbReference>
<dbReference type="KEGG" id="ath:AT3G54170"/>
<dbReference type="Araport" id="AT3G54170"/>
<dbReference type="TAIR" id="AT3G54170">
    <property type="gene designation" value="FIP37"/>
</dbReference>
<dbReference type="eggNOG" id="KOG2991">
    <property type="taxonomic scope" value="Eukaryota"/>
</dbReference>
<dbReference type="HOGENOM" id="CLU_061667_0_0_1"/>
<dbReference type="InParanoid" id="Q9ZSZ8"/>
<dbReference type="OMA" id="MASHSHI"/>
<dbReference type="PhylomeDB" id="Q9ZSZ8"/>
<dbReference type="PRO" id="PR:Q9ZSZ8"/>
<dbReference type="Proteomes" id="UP000006548">
    <property type="component" value="Chromosome 3"/>
</dbReference>
<dbReference type="ExpressionAtlas" id="Q9ZSZ8">
    <property type="expression patterns" value="baseline and differential"/>
</dbReference>
<dbReference type="GO" id="GO:0016607">
    <property type="term" value="C:nuclear speck"/>
    <property type="evidence" value="ECO:0007669"/>
    <property type="project" value="UniProtKB-SubCell"/>
</dbReference>
<dbReference type="GO" id="GO:0005634">
    <property type="term" value="C:nucleus"/>
    <property type="evidence" value="ECO:0000314"/>
    <property type="project" value="TAIR"/>
</dbReference>
<dbReference type="GO" id="GO:0009506">
    <property type="term" value="C:plasmodesma"/>
    <property type="evidence" value="ECO:0007005"/>
    <property type="project" value="TAIR"/>
</dbReference>
<dbReference type="GO" id="GO:0036396">
    <property type="term" value="C:RNA N6-methyladenosine methyltransferase complex"/>
    <property type="evidence" value="ECO:0000314"/>
    <property type="project" value="UniProtKB"/>
</dbReference>
<dbReference type="GO" id="GO:0010073">
    <property type="term" value="P:meristem maintenance"/>
    <property type="evidence" value="ECO:0000315"/>
    <property type="project" value="TAIR"/>
</dbReference>
<dbReference type="GO" id="GO:0016556">
    <property type="term" value="P:mRNA modification"/>
    <property type="evidence" value="ECO:0007669"/>
    <property type="project" value="InterPro"/>
</dbReference>
<dbReference type="GO" id="GO:0006397">
    <property type="term" value="P:mRNA processing"/>
    <property type="evidence" value="ECO:0007669"/>
    <property type="project" value="UniProtKB-KW"/>
</dbReference>
<dbReference type="GO" id="GO:0000381">
    <property type="term" value="P:regulation of alternative mRNA splicing, via spliceosome"/>
    <property type="evidence" value="ECO:0007669"/>
    <property type="project" value="InterPro"/>
</dbReference>
<dbReference type="GO" id="GO:0001510">
    <property type="term" value="P:RNA methylation"/>
    <property type="evidence" value="ECO:0000315"/>
    <property type="project" value="TAIR"/>
</dbReference>
<dbReference type="GO" id="GO:0008380">
    <property type="term" value="P:RNA splicing"/>
    <property type="evidence" value="ECO:0007669"/>
    <property type="project" value="UniProtKB-KW"/>
</dbReference>
<dbReference type="InterPro" id="IPR033757">
    <property type="entry name" value="WTAP"/>
</dbReference>
<dbReference type="PANTHER" id="PTHR15217:SF0">
    <property type="entry name" value="PRE-MRNA-SPLICING REGULATOR WTAP"/>
    <property type="match status" value="1"/>
</dbReference>
<dbReference type="PANTHER" id="PTHR15217">
    <property type="entry name" value="WILMS' TUMOR 1-ASSOCIATING PROTEIN"/>
    <property type="match status" value="1"/>
</dbReference>
<dbReference type="Pfam" id="PF17098">
    <property type="entry name" value="Wtap"/>
    <property type="match status" value="1"/>
</dbReference>
<keyword id="KW-0007">Acetylation</keyword>
<keyword id="KW-0175">Coiled coil</keyword>
<keyword id="KW-0507">mRNA processing</keyword>
<keyword id="KW-0508">mRNA splicing</keyword>
<keyword id="KW-0539">Nucleus</keyword>
<keyword id="KW-1185">Reference proteome</keyword>
<comment type="function">
    <text evidence="3 5">Probable regulatory subunit of the N6-methyltransferase complex, a multiprotein complex that mediates N6-methyladenosine (m6A) methylation at the 5'-[AG]GAC-3' consensus sites of some mRNAs (PubMed:15047892, PubMed:28503769). Associates with MTA, MTB, VIR and HAKAI to form the m6A writer complex which is essential for adenosine methylation at specific mRNA sequences (PubMed:28503769). N6-methyladenosine (m6A) plays a role in mRNA stability, processing, translation efficiency and editing (PubMed:15047892, PubMed:28503769). Essential protein required during endosperm development and embryogenesis. Involved in endoreduplication, especially in trichomes. May play a role in splicing events (PubMed:15047892).</text>
</comment>
<comment type="subunit">
    <text evidence="4 5 6">Forms homodimers (PubMed:28503769). Interacts with MTA/EMB1706 (PubMed:18505803, PubMed:28503769). Interacts with FKBP12; interaction is inhibited by the immunosuppressive drug FK506 (PubMed:9807817). Interacts with VIR (PubMed:28503769). Associates with MTA, MTB, VIR and HAKAI to form the m6A writer complex which is essential for adenosine methylation at specific mRNA sequences (PubMed:28503769).</text>
</comment>
<comment type="interaction">
    <interactant intactId="EBI-1641243">
        <id>Q9ZSZ8</id>
    </interactant>
    <interactant intactId="EBI-4426649">
        <id>Q17TI5</id>
        <label>BRX</label>
    </interactant>
    <organismsDiffer>false</organismsDiffer>
    <experiments>4</experiments>
</comment>
<comment type="interaction">
    <interactant intactId="EBI-1641243">
        <id>Q9ZSZ8</id>
    </interactant>
    <interactant intactId="EBI-1641228">
        <id>Q8LGG0</id>
        <label>FKBP12</label>
    </interactant>
    <organismsDiffer>false</organismsDiffer>
    <experiments>3</experiments>
</comment>
<comment type="interaction">
    <interactant intactId="EBI-1641243">
        <id>Q9ZSZ8</id>
    </interactant>
    <interactant intactId="EBI-1797380">
        <id>O82486</id>
        <label>MTA</label>
    </interactant>
    <organismsDiffer>false</organismsDiffer>
    <experiments>5</experiments>
</comment>
<comment type="subcellular location">
    <subcellularLocation>
        <location evidence="3 5">Nucleus speckle</location>
    </subcellularLocation>
    <subcellularLocation>
        <location evidence="5">Nucleus</location>
        <location evidence="5">Nucleoplasm</location>
    </subcellularLocation>
    <text evidence="3">Nuclear with a speckled distribution pattern.</text>
</comment>
<comment type="tissue specificity">
    <text evidence="3">Ubiquitously expressed with higher levels in primary and lateral roots, leaves, trichomes, and in pollen grains (at protein level).</text>
</comment>
<comment type="disruption phenotype">
    <text evidence="3">Embryogenesis arrest at the midglobular stage.</text>
</comment>
<comment type="similarity">
    <text evidence="9">Belongs to the fl(2)d family.</text>
</comment>
<feature type="chain" id="PRO_0000087258" description="FKBP12-interacting protein of 37 kDa">
    <location>
        <begin position="1"/>
        <end position="330"/>
    </location>
</feature>
<feature type="region of interest" description="Disordered" evidence="2">
    <location>
        <begin position="1"/>
        <end position="43"/>
    </location>
</feature>
<feature type="coiled-coil region" evidence="1">
    <location>
        <begin position="56"/>
        <end position="308"/>
    </location>
</feature>
<feature type="compositionally biased region" description="Acidic residues" evidence="2">
    <location>
        <begin position="1"/>
        <end position="12"/>
    </location>
</feature>
<feature type="compositionally biased region" description="Polar residues" evidence="2">
    <location>
        <begin position="17"/>
        <end position="26"/>
    </location>
</feature>
<feature type="modified residue" description="N-acetylmethionine" evidence="12">
    <location>
        <position position="1"/>
    </location>
</feature>
<sequence length="330" mass="37215">MEFSSQDDDFGGDDSAANATRASGNRRSFGDLEDDEDDIFGSTTVAPGVRTGMILSLRGSLKNCKDDLASCQNELESAKTEIQKWKSAFQNESFVPAGKSPEPRFLIDYIQNLKSSEKSLKEQLEIAKRKEASCIVQYAKREQEMAELKSAVRDLKSQLKPASMQARRLLLDPAIHEEFSRLKNLVEEKDKKIKELQDNIAAVTFTPQSKNGKMLMAKCRTLQEENEEIGHQAAEGKIHELAIKLAMQKSQNAELRSQFEGLYKHMEELTNDVERSNETVIILQEKLEEKEKEIERVKKGLEIVSELVGDKKDEVDEIDEDAKEEIAGGE</sequence>
<proteinExistence type="evidence at protein level"/>
<accession>Q9ZSZ8</accession>
<name>FIP37_ARATH</name>
<reference key="1">
    <citation type="journal article" date="1998" name="Plant J.">
        <title>An Arabidopsis immunophilin, AtFKBP12, binds to AtFIP37 (FKBP interacting protein) in an interaction that is disrupted by FK506.</title>
        <authorList>
            <person name="Faure J.-D."/>
            <person name="Gingerich D."/>
            <person name="Howell S.H."/>
        </authorList>
    </citation>
    <scope>NUCLEOTIDE SEQUENCE [MRNA]</scope>
    <scope>INTERACTION WITH FKBP12</scope>
    <source>
        <strain>cv. Columbia</strain>
    </source>
</reference>
<reference key="2">
    <citation type="journal article" date="2000" name="Nature">
        <title>Sequence and analysis of chromosome 3 of the plant Arabidopsis thaliana.</title>
        <authorList>
            <person name="Salanoubat M."/>
            <person name="Lemcke K."/>
            <person name="Rieger M."/>
            <person name="Ansorge W."/>
            <person name="Unseld M."/>
            <person name="Fartmann B."/>
            <person name="Valle G."/>
            <person name="Bloecker H."/>
            <person name="Perez-Alonso M."/>
            <person name="Obermaier B."/>
            <person name="Delseny M."/>
            <person name="Boutry M."/>
            <person name="Grivell L.A."/>
            <person name="Mache R."/>
            <person name="Puigdomenech P."/>
            <person name="De Simone V."/>
            <person name="Choisne N."/>
            <person name="Artiguenave F."/>
            <person name="Robert C."/>
            <person name="Brottier P."/>
            <person name="Wincker P."/>
            <person name="Cattolico L."/>
            <person name="Weissenbach J."/>
            <person name="Saurin W."/>
            <person name="Quetier F."/>
            <person name="Schaefer M."/>
            <person name="Mueller-Auer S."/>
            <person name="Gabel C."/>
            <person name="Fuchs M."/>
            <person name="Benes V."/>
            <person name="Wurmbach E."/>
            <person name="Drzonek H."/>
            <person name="Erfle H."/>
            <person name="Jordan N."/>
            <person name="Bangert S."/>
            <person name="Wiedelmann R."/>
            <person name="Kranz H."/>
            <person name="Voss H."/>
            <person name="Holland R."/>
            <person name="Brandt P."/>
            <person name="Nyakatura G."/>
            <person name="Vezzi A."/>
            <person name="D'Angelo M."/>
            <person name="Pallavicini A."/>
            <person name="Toppo S."/>
            <person name="Simionati B."/>
            <person name="Conrad A."/>
            <person name="Hornischer K."/>
            <person name="Kauer G."/>
            <person name="Loehnert T.-H."/>
            <person name="Nordsiek G."/>
            <person name="Reichelt J."/>
            <person name="Scharfe M."/>
            <person name="Schoen O."/>
            <person name="Bargues M."/>
            <person name="Terol J."/>
            <person name="Climent J."/>
            <person name="Navarro P."/>
            <person name="Collado C."/>
            <person name="Perez-Perez A."/>
            <person name="Ottenwaelder B."/>
            <person name="Duchemin D."/>
            <person name="Cooke R."/>
            <person name="Laudie M."/>
            <person name="Berger-Llauro C."/>
            <person name="Purnelle B."/>
            <person name="Masuy D."/>
            <person name="de Haan M."/>
            <person name="Maarse A.C."/>
            <person name="Alcaraz J.-P."/>
            <person name="Cottet A."/>
            <person name="Casacuberta E."/>
            <person name="Monfort A."/>
            <person name="Argiriou A."/>
            <person name="Flores M."/>
            <person name="Liguori R."/>
            <person name="Vitale D."/>
            <person name="Mannhaupt G."/>
            <person name="Haase D."/>
            <person name="Schoof H."/>
            <person name="Rudd S."/>
            <person name="Zaccaria P."/>
            <person name="Mewes H.-W."/>
            <person name="Mayer K.F.X."/>
            <person name="Kaul S."/>
            <person name="Town C.D."/>
            <person name="Koo H.L."/>
            <person name="Tallon L.J."/>
            <person name="Jenkins J."/>
            <person name="Rooney T."/>
            <person name="Rizzo M."/>
            <person name="Walts A."/>
            <person name="Utterback T."/>
            <person name="Fujii C.Y."/>
            <person name="Shea T.P."/>
            <person name="Creasy T.H."/>
            <person name="Haas B."/>
            <person name="Maiti R."/>
            <person name="Wu D."/>
            <person name="Peterson J."/>
            <person name="Van Aken S."/>
            <person name="Pai G."/>
            <person name="Militscher J."/>
            <person name="Sellers P."/>
            <person name="Gill J.E."/>
            <person name="Feldblyum T.V."/>
            <person name="Preuss D."/>
            <person name="Lin X."/>
            <person name="Nierman W.C."/>
            <person name="Salzberg S.L."/>
            <person name="White O."/>
            <person name="Venter J.C."/>
            <person name="Fraser C.M."/>
            <person name="Kaneko T."/>
            <person name="Nakamura Y."/>
            <person name="Sato S."/>
            <person name="Kato T."/>
            <person name="Asamizu E."/>
            <person name="Sasamoto S."/>
            <person name="Kimura T."/>
            <person name="Idesawa K."/>
            <person name="Kawashima K."/>
            <person name="Kishida Y."/>
            <person name="Kiyokawa C."/>
            <person name="Kohara M."/>
            <person name="Matsumoto M."/>
            <person name="Matsuno A."/>
            <person name="Muraki A."/>
            <person name="Nakayama S."/>
            <person name="Nakazaki N."/>
            <person name="Shinpo S."/>
            <person name="Takeuchi C."/>
            <person name="Wada T."/>
            <person name="Watanabe A."/>
            <person name="Yamada M."/>
            <person name="Yasuda M."/>
            <person name="Tabata S."/>
        </authorList>
    </citation>
    <scope>NUCLEOTIDE SEQUENCE [LARGE SCALE GENOMIC DNA]</scope>
    <source>
        <strain>cv. Columbia</strain>
    </source>
</reference>
<reference key="3">
    <citation type="journal article" date="2017" name="Plant J.">
        <title>Araport11: a complete reannotation of the Arabidopsis thaliana reference genome.</title>
        <authorList>
            <person name="Cheng C.Y."/>
            <person name="Krishnakumar V."/>
            <person name="Chan A.P."/>
            <person name="Thibaud-Nissen F."/>
            <person name="Schobel S."/>
            <person name="Town C.D."/>
        </authorList>
    </citation>
    <scope>GENOME REANNOTATION</scope>
    <source>
        <strain>cv. Columbia</strain>
    </source>
</reference>
<reference key="4">
    <citation type="journal article" date="2003" name="Science">
        <title>Empirical analysis of transcriptional activity in the Arabidopsis genome.</title>
        <authorList>
            <person name="Yamada K."/>
            <person name="Lim J."/>
            <person name="Dale J.M."/>
            <person name="Chen H."/>
            <person name="Shinn P."/>
            <person name="Palm C.J."/>
            <person name="Southwick A.M."/>
            <person name="Wu H.C."/>
            <person name="Kim C.J."/>
            <person name="Nguyen M."/>
            <person name="Pham P.K."/>
            <person name="Cheuk R.F."/>
            <person name="Karlin-Newmann G."/>
            <person name="Liu S.X."/>
            <person name="Lam B."/>
            <person name="Sakano H."/>
            <person name="Wu T."/>
            <person name="Yu G."/>
            <person name="Miranda M."/>
            <person name="Quach H.L."/>
            <person name="Tripp M."/>
            <person name="Chang C.H."/>
            <person name="Lee J.M."/>
            <person name="Toriumi M.J."/>
            <person name="Chan M.M."/>
            <person name="Tang C.C."/>
            <person name="Onodera C.S."/>
            <person name="Deng J.M."/>
            <person name="Akiyama K."/>
            <person name="Ansari Y."/>
            <person name="Arakawa T."/>
            <person name="Banh J."/>
            <person name="Banno F."/>
            <person name="Bowser L."/>
            <person name="Brooks S.Y."/>
            <person name="Carninci P."/>
            <person name="Chao Q."/>
            <person name="Choy N."/>
            <person name="Enju A."/>
            <person name="Goldsmith A.D."/>
            <person name="Gurjal M."/>
            <person name="Hansen N.F."/>
            <person name="Hayashizaki Y."/>
            <person name="Johnson-Hopson C."/>
            <person name="Hsuan V.W."/>
            <person name="Iida K."/>
            <person name="Karnes M."/>
            <person name="Khan S."/>
            <person name="Koesema E."/>
            <person name="Ishida J."/>
            <person name="Jiang P.X."/>
            <person name="Jones T."/>
            <person name="Kawai J."/>
            <person name="Kamiya A."/>
            <person name="Meyers C."/>
            <person name="Nakajima M."/>
            <person name="Narusaka M."/>
            <person name="Seki M."/>
            <person name="Sakurai T."/>
            <person name="Satou M."/>
            <person name="Tamse R."/>
            <person name="Vaysberg M."/>
            <person name="Wallender E.K."/>
            <person name="Wong C."/>
            <person name="Yamamura Y."/>
            <person name="Yuan S."/>
            <person name="Shinozaki K."/>
            <person name="Davis R.W."/>
            <person name="Theologis A."/>
            <person name="Ecker J.R."/>
        </authorList>
    </citation>
    <scope>NUCLEOTIDE SEQUENCE [LARGE SCALE MRNA]</scope>
    <source>
        <strain>cv. Columbia</strain>
    </source>
</reference>
<reference key="5">
    <citation type="journal article" date="2004" name="Plant Physiol.">
        <title>The immunophilin-interacting protein AtFIP37 from Arabidopsis is essential for plant development and is involved in trichome endoreduplication.</title>
        <authorList>
            <person name="Vespa L."/>
            <person name="Vachon G."/>
            <person name="Berger F."/>
            <person name="Perazza D."/>
            <person name="Faure J.-D."/>
            <person name="Herzog M."/>
        </authorList>
    </citation>
    <scope>FUNCTION</scope>
    <scope>TISSUE SPECIFICITY</scope>
    <scope>SUBCELLULAR LOCATION</scope>
    <scope>DISRUPTION PHENOTYPE</scope>
</reference>
<reference key="6">
    <citation type="journal article" date="2008" name="Plant Cell">
        <title>MTA is an Arabidopsis messenger RNA adenosine methylase and interacts with a homolog of a sex-specific splicing factor.</title>
        <authorList>
            <person name="Zhong S."/>
            <person name="Li H."/>
            <person name="Bodi Z."/>
            <person name="Button J."/>
            <person name="Vespa L."/>
            <person name="Herzog M."/>
            <person name="Fray R.G."/>
        </authorList>
    </citation>
    <scope>INTERACTION WITH MTA</scope>
</reference>
<reference key="7">
    <citation type="journal article" date="2012" name="Mol. Cell. Proteomics">
        <title>Comparative large-scale characterisation of plant vs. mammal proteins reveals similar and idiosyncratic N-alpha acetylation features.</title>
        <authorList>
            <person name="Bienvenut W.V."/>
            <person name="Sumpton D."/>
            <person name="Martinez A."/>
            <person name="Lilla S."/>
            <person name="Espagne C."/>
            <person name="Meinnel T."/>
            <person name="Giglione C."/>
        </authorList>
    </citation>
    <scope>ACETYLATION [LARGE SCALE ANALYSIS] AT MET-1</scope>
    <scope>IDENTIFICATION BY MASS SPECTROMETRY [LARGE SCALE ANALYSIS]</scope>
</reference>
<reference key="8">
    <citation type="journal article" date="2017" name="New Phytol.">
        <title>A mRNA methylation in Arabidopsis reveals a role for the conserved E3 ubiquitin ligase HAKAI.</title>
        <authorList>
            <person name="Ruzicka K."/>
            <person name="Zhang M."/>
            <person name="Campilho A."/>
            <person name="Bodi Z."/>
            <person name="Kashif M."/>
            <person name="Saleh M."/>
            <person name="Eeckhout D."/>
            <person name="El-Showk S."/>
            <person name="Li H."/>
            <person name="Zhong S."/>
            <person name="De Jaeger G."/>
            <person name="Mongan N.P."/>
            <person name="Hejatko J."/>
            <person name="Helariutta Y."/>
            <person name="Fray R.G."/>
        </authorList>
    </citation>
    <scope>FUNCTION</scope>
    <scope>IDENTIFICATION BY MASS SPECTROMETRY</scope>
    <scope>HOMODIMERIZATION</scope>
    <scope>INTERACTION WITH MTA AND VIR</scope>
    <scope>SUBCELLULAR LOCATION</scope>
</reference>
<protein>
    <recommendedName>
        <fullName evidence="9">FKBP12-interacting protein of 37 kDa</fullName>
        <shortName evidence="9">FIP-37</shortName>
    </recommendedName>
    <alternativeName>
        <fullName evidence="8">Immunophilin-interacting protein AtFIP37</fullName>
    </alternativeName>
    <alternativeName>
        <fullName evidence="7">Protein WTAP homolog</fullName>
    </alternativeName>
</protein>
<evidence type="ECO:0000255" key="1"/>
<evidence type="ECO:0000256" key="2">
    <source>
        <dbReference type="SAM" id="MobiDB-lite"/>
    </source>
</evidence>
<evidence type="ECO:0000269" key="3">
    <source>
    </source>
</evidence>
<evidence type="ECO:0000269" key="4">
    <source>
    </source>
</evidence>
<evidence type="ECO:0000269" key="5">
    <source>
    </source>
</evidence>
<evidence type="ECO:0000269" key="6">
    <source>
    </source>
</evidence>
<evidence type="ECO:0000303" key="7">
    <source>
    </source>
</evidence>
<evidence type="ECO:0000303" key="8">
    <source>
    </source>
</evidence>
<evidence type="ECO:0000305" key="9"/>
<evidence type="ECO:0000312" key="10">
    <source>
        <dbReference type="Araport" id="AT3G54170"/>
    </source>
</evidence>
<evidence type="ECO:0000312" key="11">
    <source>
        <dbReference type="EMBL" id="CAB70991.1"/>
    </source>
</evidence>
<evidence type="ECO:0007744" key="12">
    <source>
    </source>
</evidence>
<organism>
    <name type="scientific">Arabidopsis thaliana</name>
    <name type="common">Mouse-ear cress</name>
    <dbReference type="NCBI Taxonomy" id="3702"/>
    <lineage>
        <taxon>Eukaryota</taxon>
        <taxon>Viridiplantae</taxon>
        <taxon>Streptophyta</taxon>
        <taxon>Embryophyta</taxon>
        <taxon>Tracheophyta</taxon>
        <taxon>Spermatophyta</taxon>
        <taxon>Magnoliopsida</taxon>
        <taxon>eudicotyledons</taxon>
        <taxon>Gunneridae</taxon>
        <taxon>Pentapetalae</taxon>
        <taxon>rosids</taxon>
        <taxon>malvids</taxon>
        <taxon>Brassicales</taxon>
        <taxon>Brassicaceae</taxon>
        <taxon>Camelineae</taxon>
        <taxon>Arabidopsis</taxon>
    </lineage>
</organism>
<gene>
    <name evidence="8" type="primary">FIP37</name>
    <name evidence="10" type="ordered locus">At3g54170</name>
    <name evidence="11" type="ORF">F24B22.130</name>
</gene>